<gene>
    <name evidence="1" type="primary">sepF</name>
    <name type="ordered locus">CPE1853</name>
</gene>
<proteinExistence type="inferred from homology"/>
<accession>Q8XJA8</accession>
<reference key="1">
    <citation type="journal article" date="2002" name="Proc. Natl. Acad. Sci. U.S.A.">
        <title>Complete genome sequence of Clostridium perfringens, an anaerobic flesh-eater.</title>
        <authorList>
            <person name="Shimizu T."/>
            <person name="Ohtani K."/>
            <person name="Hirakawa H."/>
            <person name="Ohshima K."/>
            <person name="Yamashita A."/>
            <person name="Shiba T."/>
            <person name="Ogasawara N."/>
            <person name="Hattori M."/>
            <person name="Kuhara S."/>
            <person name="Hayashi H."/>
        </authorList>
    </citation>
    <scope>NUCLEOTIDE SEQUENCE [LARGE SCALE GENOMIC DNA]</scope>
    <source>
        <strain>13 / Type A</strain>
    </source>
</reference>
<evidence type="ECO:0000255" key="1">
    <source>
        <dbReference type="HAMAP-Rule" id="MF_01197"/>
    </source>
</evidence>
<evidence type="ECO:0000305" key="2"/>
<protein>
    <recommendedName>
        <fullName evidence="1">Cell division protein SepF</fullName>
    </recommendedName>
</protein>
<organism>
    <name type="scientific">Clostridium perfringens (strain 13 / Type A)</name>
    <dbReference type="NCBI Taxonomy" id="195102"/>
    <lineage>
        <taxon>Bacteria</taxon>
        <taxon>Bacillati</taxon>
        <taxon>Bacillota</taxon>
        <taxon>Clostridia</taxon>
        <taxon>Eubacteriales</taxon>
        <taxon>Clostridiaceae</taxon>
        <taxon>Clostridium</taxon>
    </lineage>
</organism>
<keyword id="KW-0131">Cell cycle</keyword>
<keyword id="KW-0132">Cell division</keyword>
<keyword id="KW-0963">Cytoplasm</keyword>
<keyword id="KW-1185">Reference proteome</keyword>
<keyword id="KW-0717">Septation</keyword>
<sequence>MSKVVSKMKSFLGFDEFEDEDEVMEEEEVMEEEESFAPVLSSKKNGKVVNIHTANTAKLMITKPLVYDDATEICTALKNRKIVVINTTSLELRTAQRLIDFVGGACYALCGELQEVEKGVFIVSPSNVEVSNELKSELSNKGMFNWASK</sequence>
<dbReference type="EMBL" id="BA000016">
    <property type="protein sequence ID" value="BAB81559.1"/>
    <property type="status" value="ALT_INIT"/>
    <property type="molecule type" value="Genomic_DNA"/>
</dbReference>
<dbReference type="RefSeq" id="WP_003451474.1">
    <property type="nucleotide sequence ID" value="NC_003366.1"/>
</dbReference>
<dbReference type="SMR" id="Q8XJA8"/>
<dbReference type="STRING" id="195102.gene:10491117"/>
<dbReference type="DNASU" id="990162"/>
<dbReference type="KEGG" id="cpe:CPE1853"/>
<dbReference type="HOGENOM" id="CLU_078499_4_0_9"/>
<dbReference type="Proteomes" id="UP000000818">
    <property type="component" value="Chromosome"/>
</dbReference>
<dbReference type="GO" id="GO:0005737">
    <property type="term" value="C:cytoplasm"/>
    <property type="evidence" value="ECO:0007669"/>
    <property type="project" value="UniProtKB-SubCell"/>
</dbReference>
<dbReference type="GO" id="GO:0000917">
    <property type="term" value="P:division septum assembly"/>
    <property type="evidence" value="ECO:0007669"/>
    <property type="project" value="UniProtKB-KW"/>
</dbReference>
<dbReference type="GO" id="GO:0043093">
    <property type="term" value="P:FtsZ-dependent cytokinesis"/>
    <property type="evidence" value="ECO:0007669"/>
    <property type="project" value="UniProtKB-UniRule"/>
</dbReference>
<dbReference type="Gene3D" id="3.30.110.150">
    <property type="entry name" value="SepF-like protein"/>
    <property type="match status" value="1"/>
</dbReference>
<dbReference type="HAMAP" id="MF_01197">
    <property type="entry name" value="SepF"/>
    <property type="match status" value="1"/>
</dbReference>
<dbReference type="InterPro" id="IPR023052">
    <property type="entry name" value="Cell_div_SepF"/>
</dbReference>
<dbReference type="InterPro" id="IPR007561">
    <property type="entry name" value="Cell_div_SepF/SepF-rel"/>
</dbReference>
<dbReference type="InterPro" id="IPR038594">
    <property type="entry name" value="SepF-like_sf"/>
</dbReference>
<dbReference type="PANTHER" id="PTHR35798">
    <property type="entry name" value="CELL DIVISION PROTEIN SEPF"/>
    <property type="match status" value="1"/>
</dbReference>
<dbReference type="PANTHER" id="PTHR35798:SF1">
    <property type="entry name" value="CELL DIVISION PROTEIN SEPF"/>
    <property type="match status" value="1"/>
</dbReference>
<dbReference type="Pfam" id="PF04472">
    <property type="entry name" value="SepF"/>
    <property type="match status" value="1"/>
</dbReference>
<comment type="function">
    <text evidence="1">Cell division protein that is part of the divisome complex and is recruited early to the Z-ring. Probably stimulates Z-ring formation, perhaps through the cross-linking of FtsZ protofilaments. Its function overlaps with FtsA.</text>
</comment>
<comment type="subunit">
    <text evidence="1">Homodimer. Interacts with FtsZ.</text>
</comment>
<comment type="subcellular location">
    <subcellularLocation>
        <location evidence="1">Cytoplasm</location>
    </subcellularLocation>
    <text evidence="1">Localizes to the division site, in a FtsZ-dependent manner.</text>
</comment>
<comment type="similarity">
    <text evidence="1">Belongs to the SepF family.</text>
</comment>
<comment type="sequence caution" evidence="2">
    <conflict type="erroneous initiation">
        <sequence resource="EMBL-CDS" id="BAB81559"/>
    </conflict>
</comment>
<name>SEPF_CLOPE</name>
<feature type="chain" id="PRO_0000333999" description="Cell division protein SepF">
    <location>
        <begin position="1"/>
        <end position="149"/>
    </location>
</feature>